<name>TKNA_CAVPO</name>
<accession>P67932</accession>
<accession>P01290</accession>
<feature type="peptide" id="PRO_0000044419" description="Substance P">
    <location>
        <begin position="1"/>
        <end position="11"/>
    </location>
</feature>
<feature type="site" description="Cleavage; b2y FAP" evidence="1">
    <location>
        <begin position="2"/>
        <end position="3"/>
    </location>
</feature>
<feature type="site" description="Cleavage; by MME" evidence="1">
    <location>
        <begin position="6"/>
        <end position="7"/>
    </location>
</feature>
<feature type="site" description="Cleavage; by MME" evidence="1">
    <location>
        <begin position="7"/>
        <end position="8"/>
    </location>
</feature>
<feature type="site" description="Cleavage; by ACE" evidence="1">
    <location>
        <begin position="8"/>
        <end position="9"/>
    </location>
</feature>
<feature type="site" description="Cleavage; by ACE and MME" evidence="1">
    <location>
        <begin position="9"/>
        <end position="10"/>
    </location>
</feature>
<feature type="modified residue" description="Methionine amide" evidence="2">
    <location>
        <position position="11"/>
    </location>
</feature>
<organism>
    <name type="scientific">Cavia porcellus</name>
    <name type="common">Guinea pig</name>
    <dbReference type="NCBI Taxonomy" id="10141"/>
    <lineage>
        <taxon>Eukaryota</taxon>
        <taxon>Metazoa</taxon>
        <taxon>Chordata</taxon>
        <taxon>Craniata</taxon>
        <taxon>Vertebrata</taxon>
        <taxon>Euteleostomi</taxon>
        <taxon>Mammalia</taxon>
        <taxon>Eutheria</taxon>
        <taxon>Euarchontoglires</taxon>
        <taxon>Glires</taxon>
        <taxon>Rodentia</taxon>
        <taxon>Hystricomorpha</taxon>
        <taxon>Caviidae</taxon>
        <taxon>Cavia</taxon>
    </lineage>
</organism>
<protein>
    <recommendedName>
        <fullName>Substance P</fullName>
    </recommendedName>
</protein>
<reference key="1">
    <citation type="journal article" date="1989" name="Neuropeptides">
        <title>Primary amino acid sequence of guinea-pig substance P.</title>
        <authorList>
            <person name="Murphy R."/>
        </authorList>
    </citation>
    <scope>PROTEIN SEQUENCE</scope>
    <scope>AMIDATION AT MET-11</scope>
    <source>
        <tissue>Small intestine</tissue>
    </source>
</reference>
<proteinExistence type="evidence at protein level"/>
<keyword id="KW-0027">Amidation</keyword>
<keyword id="KW-0903">Direct protein sequencing</keyword>
<keyword id="KW-0527">Neuropeptide</keyword>
<keyword id="KW-0529">Neurotransmitter</keyword>
<keyword id="KW-1185">Reference proteome</keyword>
<keyword id="KW-0964">Secreted</keyword>
<sequence length="11" mass="1349">RPKPQQFFGLM</sequence>
<comment type="function">
    <text>Tachykinins are active peptides which excite neurons, evoke behavioral responses, are potent vasodilators and secretagogues, and contract (directly or indirectly) many smooth muscles.</text>
</comment>
<comment type="subcellular location">
    <subcellularLocation>
        <location>Secreted</location>
    </subcellularLocation>
</comment>
<comment type="PTM">
    <molecule>Substance P</molecule>
    <text evidence="1">The substance P form is cleaved at Pro-2 by the prolyl endopeptidase FAP (seprase) activity (in vitro). Substance P is also cleaved and degraded by Angiotensin-converting enzyme (ACE) and neprilysin (MME).</text>
</comment>
<comment type="similarity">
    <text evidence="3">Belongs to the tachykinin family.</text>
</comment>
<gene>
    <name type="primary">TAC1</name>
    <name type="synonym">NKA</name>
    <name type="synonym">NKNA</name>
    <name type="synonym">TAC2</name>
</gene>
<evidence type="ECO:0000250" key="1">
    <source>
        <dbReference type="UniProtKB" id="P20366"/>
    </source>
</evidence>
<evidence type="ECO:0000269" key="2">
    <source>
    </source>
</evidence>
<evidence type="ECO:0000305" key="3"/>
<dbReference type="PIR" id="A60654">
    <property type="entry name" value="A60654"/>
</dbReference>
<dbReference type="BindingDB" id="P67932"/>
<dbReference type="InParanoid" id="P67932"/>
<dbReference type="Proteomes" id="UP000005447">
    <property type="component" value="Unassembled WGS sequence"/>
</dbReference>
<dbReference type="GO" id="GO:0005576">
    <property type="term" value="C:extracellular region"/>
    <property type="evidence" value="ECO:0007669"/>
    <property type="project" value="UniProtKB-SubCell"/>
</dbReference>
<dbReference type="GO" id="GO:0045202">
    <property type="term" value="C:synapse"/>
    <property type="evidence" value="ECO:0007669"/>
    <property type="project" value="GOC"/>
</dbReference>
<dbReference type="GO" id="GO:0007268">
    <property type="term" value="P:chemical synaptic transmission"/>
    <property type="evidence" value="ECO:0007669"/>
    <property type="project" value="UniProtKB-KW"/>
</dbReference>
<dbReference type="GO" id="GO:0007218">
    <property type="term" value="P:neuropeptide signaling pathway"/>
    <property type="evidence" value="ECO:0007669"/>
    <property type="project" value="UniProtKB-KW"/>
</dbReference>
<dbReference type="GO" id="GO:0007217">
    <property type="term" value="P:tachykinin receptor signaling pathway"/>
    <property type="evidence" value="ECO:0007669"/>
    <property type="project" value="InterPro"/>
</dbReference>
<dbReference type="InterPro" id="IPR013055">
    <property type="entry name" value="Tachy_Neuro_lke_CS"/>
</dbReference>
<dbReference type="InterPro" id="IPR008215">
    <property type="entry name" value="Tachykinin_dom"/>
</dbReference>
<dbReference type="Pfam" id="PF02202">
    <property type="entry name" value="Tachykinin"/>
    <property type="match status" value="1"/>
</dbReference>
<dbReference type="PROSITE" id="PS00267">
    <property type="entry name" value="TACHYKININ"/>
    <property type="match status" value="1"/>
</dbReference>